<keyword id="KW-0058">Aromatic hydrocarbons catabolism</keyword>
<keyword id="KW-0903">Direct protein sequencing</keyword>
<keyword id="KW-0274">FAD</keyword>
<keyword id="KW-0285">Flavoprotein</keyword>
<keyword id="KW-0520">NAD</keyword>
<keyword id="KW-0560">Oxidoreductase</keyword>
<keyword id="KW-0614">Plasmid</keyword>
<name>BEDA_PSEPU</name>
<evidence type="ECO:0000255" key="1"/>
<evidence type="ECO:0000305" key="2"/>
<comment type="function">
    <text>Part of the electron transfer component of benzene 1,2-dioxygenase, transfers electrons from ferredoxin to NADH.</text>
</comment>
<comment type="catalytic activity">
    <reaction>
        <text>2 reduced [2Fe-2S]-[ferredoxin] + NAD(+) + H(+) = 2 oxidized [2Fe-2S]-[ferredoxin] + NADH</text>
        <dbReference type="Rhea" id="RHEA:16521"/>
        <dbReference type="Rhea" id="RHEA-COMP:10000"/>
        <dbReference type="Rhea" id="RHEA-COMP:10001"/>
        <dbReference type="ChEBI" id="CHEBI:15378"/>
        <dbReference type="ChEBI" id="CHEBI:33737"/>
        <dbReference type="ChEBI" id="CHEBI:33738"/>
        <dbReference type="ChEBI" id="CHEBI:57540"/>
        <dbReference type="ChEBI" id="CHEBI:57945"/>
        <dbReference type="EC" id="1.18.1.3"/>
    </reaction>
</comment>
<comment type="cofactor">
    <cofactor>
        <name>FAD</name>
        <dbReference type="ChEBI" id="CHEBI:57692"/>
    </cofactor>
</comment>
<comment type="pathway">
    <text>Aromatic compound metabolism; benzene degradation; catechol from benzene: step 1/2.</text>
</comment>
<comment type="subunit">
    <text>This dioxygenase system consists of four proteins: the two subunits of the hydroxylase component (BedC1 and BedC2), a ferredoxin (BedB) and a ferredoxin reductase (BedA).</text>
</comment>
<comment type="similarity">
    <text evidence="2">Belongs to the bacterial ring-hydroxylating dioxygenase ferredoxin reductase family.</text>
</comment>
<geneLocation type="plasmid">
    <name>pHMT112</name>
</geneLocation>
<protein>
    <recommendedName>
        <fullName>Benzene 1,2-dioxygenase system ferredoxin--NAD(+) reductase subunit</fullName>
        <ecNumber>1.18.1.3</ecNumber>
    </recommendedName>
</protein>
<proteinExistence type="evidence at protein level"/>
<accession>Q07946</accession>
<reference key="1">
    <citation type="journal article" date="1993" name="Gene">
        <title>The Pseudomonas putida ML2 plasmid-encoded genes for benzene dioxygenase are unusual in codon usage and low in G+C content.</title>
        <authorList>
            <person name="Tan H.-M."/>
            <person name="Tang H.-Y."/>
            <person name="Joannou C."/>
            <person name="Abdel-Wahab N.H."/>
            <person name="Mason J.R."/>
        </authorList>
    </citation>
    <scope>NUCLEOTIDE SEQUENCE [GENOMIC DNA]</scope>
    <scope>PROTEIN SEQUENCE OF 3-14</scope>
    <source>
        <strain>ML2</strain>
    </source>
</reference>
<organism>
    <name type="scientific">Pseudomonas putida</name>
    <name type="common">Arthrobacter siderocapsulatus</name>
    <dbReference type="NCBI Taxonomy" id="303"/>
    <lineage>
        <taxon>Bacteria</taxon>
        <taxon>Pseudomonadati</taxon>
        <taxon>Pseudomonadota</taxon>
        <taxon>Gammaproteobacteria</taxon>
        <taxon>Pseudomonadales</taxon>
        <taxon>Pseudomonadaceae</taxon>
        <taxon>Pseudomonas</taxon>
    </lineage>
</organism>
<sequence>MANHVAIIGNGVAGFTTAQALRAEGYEGRISLIGEEQHLPYDRPSLSKAVLDGSFEQPPRLAEADWYSEASIEMLTGSEVTDLDTQKKMISLNDGSTISADAIVIATGSRARMLSLPGSQLPGVVTLRTYGDVQLLRDSWTPNTRLLIVGGGLIGCEVATTARKLGLSVTILEAGDELLVRVLGRRIGAWLRGLLTEQGVQVELKTGVSGFSGEGQLEKVMVNDGRSFIADNALICVGADPADQLARQAGLECDRGVVVDHRGATSAKGIFAVGDVATWPLHSGGKRSLETYMNAQRQATAVAKAILGKEVSAPQLPVSWTEIAGHRMQMAGDIEGPGEYVLRGTLGIGSALLFRLLDGRIQAVVAVDAPRDFALANRLVEAQVIIEPEKLADVSNNMRDIVRANEGNQK</sequence>
<feature type="chain" id="PRO_0000167652" description="Benzene 1,2-dioxygenase system ferredoxin--NAD(+) reductase subunit">
    <location>
        <begin position="1"/>
        <end position="410"/>
    </location>
</feature>
<feature type="binding site" evidence="1">
    <location>
        <begin position="4"/>
        <end position="35"/>
    </location>
    <ligand>
        <name>FAD</name>
        <dbReference type="ChEBI" id="CHEBI:57692"/>
    </ligand>
</feature>
<feature type="binding site" evidence="1">
    <location>
        <begin position="145"/>
        <end position="173"/>
    </location>
    <ligand>
        <name>NAD(+)</name>
        <dbReference type="ChEBI" id="CHEBI:57540"/>
    </ligand>
</feature>
<dbReference type="EC" id="1.18.1.3"/>
<dbReference type="EMBL" id="AF148496">
    <property type="protein sequence ID" value="AAA17761.1"/>
    <property type="molecule type" value="Genomic_DNA"/>
</dbReference>
<dbReference type="PIR" id="JN0810">
    <property type="entry name" value="JN0810"/>
</dbReference>
<dbReference type="SMR" id="Q07946"/>
<dbReference type="BioCyc" id="MetaCyc:MONOMER-12882"/>
<dbReference type="UniPathway" id="UPA00272">
    <property type="reaction ID" value="UER00391"/>
</dbReference>
<dbReference type="GO" id="GO:0005737">
    <property type="term" value="C:cytoplasm"/>
    <property type="evidence" value="ECO:0007669"/>
    <property type="project" value="TreeGrafter"/>
</dbReference>
<dbReference type="GO" id="GO:0008860">
    <property type="term" value="F:ferredoxin-NAD+ reductase activity"/>
    <property type="evidence" value="ECO:0007669"/>
    <property type="project" value="UniProtKB-EC"/>
</dbReference>
<dbReference type="GO" id="GO:0016651">
    <property type="term" value="F:oxidoreductase activity, acting on NAD(P)H"/>
    <property type="evidence" value="ECO:0007669"/>
    <property type="project" value="TreeGrafter"/>
</dbReference>
<dbReference type="GO" id="GO:0009056">
    <property type="term" value="P:catabolic process"/>
    <property type="evidence" value="ECO:0007669"/>
    <property type="project" value="UniProtKB-KW"/>
</dbReference>
<dbReference type="Gene3D" id="3.30.390.30">
    <property type="match status" value="1"/>
</dbReference>
<dbReference type="Gene3D" id="3.50.50.60">
    <property type="entry name" value="FAD/NAD(P)-binding domain"/>
    <property type="match status" value="2"/>
</dbReference>
<dbReference type="InterPro" id="IPR050446">
    <property type="entry name" value="FAD-oxidoreductase/Apoptosis"/>
</dbReference>
<dbReference type="InterPro" id="IPR036188">
    <property type="entry name" value="FAD/NAD-bd_sf"/>
</dbReference>
<dbReference type="InterPro" id="IPR023753">
    <property type="entry name" value="FAD/NAD-binding_dom"/>
</dbReference>
<dbReference type="InterPro" id="IPR016156">
    <property type="entry name" value="FAD/NAD-linked_Rdtase_dimer_sf"/>
</dbReference>
<dbReference type="InterPro" id="IPR028202">
    <property type="entry name" value="Reductase_C"/>
</dbReference>
<dbReference type="PANTHER" id="PTHR43557">
    <property type="entry name" value="APOPTOSIS-INDUCING FACTOR 1"/>
    <property type="match status" value="1"/>
</dbReference>
<dbReference type="PANTHER" id="PTHR43557:SF2">
    <property type="entry name" value="RIESKE DOMAIN-CONTAINING PROTEIN-RELATED"/>
    <property type="match status" value="1"/>
</dbReference>
<dbReference type="Pfam" id="PF07992">
    <property type="entry name" value="Pyr_redox_2"/>
    <property type="match status" value="1"/>
</dbReference>
<dbReference type="Pfam" id="PF14759">
    <property type="entry name" value="Reductase_C"/>
    <property type="match status" value="1"/>
</dbReference>
<dbReference type="PRINTS" id="PR00368">
    <property type="entry name" value="FADPNR"/>
</dbReference>
<dbReference type="PRINTS" id="PR00411">
    <property type="entry name" value="PNDRDTASEI"/>
</dbReference>
<dbReference type="SUPFAM" id="SSF51905">
    <property type="entry name" value="FAD/NAD(P)-binding domain"/>
    <property type="match status" value="2"/>
</dbReference>
<dbReference type="SUPFAM" id="SSF55424">
    <property type="entry name" value="FAD/NAD-linked reductases, dimerisation (C-terminal) domain"/>
    <property type="match status" value="1"/>
</dbReference>
<gene>
    <name type="primary">bedA</name>
</gene>